<protein>
    <recommendedName>
        <fullName evidence="1">2,3-bisphosphoglycerate-independent phosphoglycerate mutase</fullName>
        <shortName evidence="1">BPG-independent PGAM</shortName>
        <shortName evidence="1">Phosphoglyceromutase</shortName>
        <shortName evidence="1">iPGM</shortName>
        <ecNumber evidence="1">5.4.2.12</ecNumber>
    </recommendedName>
</protein>
<name>GPMI_BACC1</name>
<feature type="chain" id="PRO_0000212120" description="2,3-bisphosphoglycerate-independent phosphoglycerate mutase">
    <location>
        <begin position="1"/>
        <end position="509"/>
    </location>
</feature>
<feature type="active site" description="Phosphoserine intermediate" evidence="1">
    <location>
        <position position="61"/>
    </location>
</feature>
<feature type="binding site" evidence="1">
    <location>
        <position position="11"/>
    </location>
    <ligand>
        <name>Mn(2+)</name>
        <dbReference type="ChEBI" id="CHEBI:29035"/>
        <label>2</label>
    </ligand>
</feature>
<feature type="binding site" evidence="1">
    <location>
        <position position="61"/>
    </location>
    <ligand>
        <name>Mn(2+)</name>
        <dbReference type="ChEBI" id="CHEBI:29035"/>
        <label>2</label>
    </ligand>
</feature>
<feature type="binding site" evidence="1">
    <location>
        <position position="122"/>
    </location>
    <ligand>
        <name>substrate</name>
    </ligand>
</feature>
<feature type="binding site" evidence="1">
    <location>
        <begin position="152"/>
        <end position="153"/>
    </location>
    <ligand>
        <name>substrate</name>
    </ligand>
</feature>
<feature type="binding site" evidence="1">
    <location>
        <position position="184"/>
    </location>
    <ligand>
        <name>substrate</name>
    </ligand>
</feature>
<feature type="binding site" evidence="1">
    <location>
        <position position="190"/>
    </location>
    <ligand>
        <name>substrate</name>
    </ligand>
</feature>
<feature type="binding site" evidence="1">
    <location>
        <begin position="260"/>
        <end position="263"/>
    </location>
    <ligand>
        <name>substrate</name>
    </ligand>
</feature>
<feature type="binding site" evidence="1">
    <location>
        <position position="335"/>
    </location>
    <ligand>
        <name>substrate</name>
    </ligand>
</feature>
<feature type="binding site" evidence="1">
    <location>
        <position position="402"/>
    </location>
    <ligand>
        <name>Mn(2+)</name>
        <dbReference type="ChEBI" id="CHEBI:29035"/>
        <label>1</label>
    </ligand>
</feature>
<feature type="binding site" evidence="1">
    <location>
        <position position="406"/>
    </location>
    <ligand>
        <name>Mn(2+)</name>
        <dbReference type="ChEBI" id="CHEBI:29035"/>
        <label>1</label>
    </ligand>
</feature>
<feature type="binding site" evidence="1">
    <location>
        <position position="443"/>
    </location>
    <ligand>
        <name>Mn(2+)</name>
        <dbReference type="ChEBI" id="CHEBI:29035"/>
        <label>2</label>
    </ligand>
</feature>
<feature type="binding site" evidence="1">
    <location>
        <position position="444"/>
    </location>
    <ligand>
        <name>Mn(2+)</name>
        <dbReference type="ChEBI" id="CHEBI:29035"/>
        <label>2</label>
    </ligand>
</feature>
<feature type="binding site" evidence="1">
    <location>
        <position position="461"/>
    </location>
    <ligand>
        <name>Mn(2+)</name>
        <dbReference type="ChEBI" id="CHEBI:29035"/>
        <label>1</label>
    </ligand>
</feature>
<feature type="modified residue" description="Phosphotyrosine" evidence="1">
    <location>
        <position position="35"/>
    </location>
</feature>
<evidence type="ECO:0000255" key="1">
    <source>
        <dbReference type="HAMAP-Rule" id="MF_01038"/>
    </source>
</evidence>
<accession>Q72XY4</accession>
<sequence>MRKPTALIILDGFGLREETYGNAVAQAKKPNFDGYWNKFPHTTLTACGEAVGLPEGQMGNSEVGHLNIGAGRIVYQSLTRVNVAIREGEFDKNETFQSAIKSVKEKGTALHLFGLLSDGGVHSHMNHMFALLRLAAKEGVEKVYIHAFLDGRDVGPKTAQSYIDATNEVIKETGVGQFATISGRYYSMDRDKRWDRVEKCYRAMVNGEGPTYKSAEECVEDSYANGIYDEFVLPSVIVNEDNTPVATINDDDAVIFYNFRPDRAIQIARVFTNEDFREFDRGEKVPHIPEFVCMTHFSETVDGYVAFKPMNLDNTLGEVVAQAGLKQLRIAETEKYPHVTFFFSGGREAEFPGEERILINSPKVATYDLKPEMSIYEVTDALVNEIENDKHDVIILNFANCDMVGHSGMMEPTIKAVEATDECLGKVVEAILAKDGVALITADHGNADEELTSDGEPMTAHTTNPVPFIVTKNDVELREGGILGDIAPXMLTLLGVEQPKEMTGKTIIK</sequence>
<gene>
    <name evidence="1" type="primary">gpmI</name>
    <name type="synonym">gpmA</name>
    <name type="ordered locus">BCE_5239</name>
</gene>
<proteinExistence type="inferred from homology"/>
<reference key="1">
    <citation type="journal article" date="2004" name="Nucleic Acids Res.">
        <title>The genome sequence of Bacillus cereus ATCC 10987 reveals metabolic adaptations and a large plasmid related to Bacillus anthracis pXO1.</title>
        <authorList>
            <person name="Rasko D.A."/>
            <person name="Ravel J."/>
            <person name="Oekstad O.A."/>
            <person name="Helgason E."/>
            <person name="Cer R.Z."/>
            <person name="Jiang L."/>
            <person name="Shores K.A."/>
            <person name="Fouts D.E."/>
            <person name="Tourasse N.J."/>
            <person name="Angiuoli S.V."/>
            <person name="Kolonay J.F."/>
            <person name="Nelson W.C."/>
            <person name="Kolstoe A.-B."/>
            <person name="Fraser C.M."/>
            <person name="Read T.D."/>
        </authorList>
    </citation>
    <scope>NUCLEOTIDE SEQUENCE [LARGE SCALE GENOMIC DNA]</scope>
    <source>
        <strain>ATCC 10987 / NRS 248</strain>
    </source>
</reference>
<organism>
    <name type="scientific">Bacillus cereus (strain ATCC 10987 / NRS 248)</name>
    <dbReference type="NCBI Taxonomy" id="222523"/>
    <lineage>
        <taxon>Bacteria</taxon>
        <taxon>Bacillati</taxon>
        <taxon>Bacillota</taxon>
        <taxon>Bacilli</taxon>
        <taxon>Bacillales</taxon>
        <taxon>Bacillaceae</taxon>
        <taxon>Bacillus</taxon>
        <taxon>Bacillus cereus group</taxon>
    </lineage>
</organism>
<dbReference type="EC" id="5.4.2.12" evidence="1"/>
<dbReference type="EMBL" id="AE017194">
    <property type="protein sequence ID" value="AAS44140.1"/>
    <property type="molecule type" value="Genomic_DNA"/>
</dbReference>
<dbReference type="KEGG" id="bca:BCE_5239"/>
<dbReference type="HOGENOM" id="CLU_026099_2_0_9"/>
<dbReference type="UniPathway" id="UPA00109">
    <property type="reaction ID" value="UER00186"/>
</dbReference>
<dbReference type="Proteomes" id="UP000002527">
    <property type="component" value="Chromosome"/>
</dbReference>
<dbReference type="GO" id="GO:0005829">
    <property type="term" value="C:cytosol"/>
    <property type="evidence" value="ECO:0007669"/>
    <property type="project" value="TreeGrafter"/>
</dbReference>
<dbReference type="GO" id="GO:0030145">
    <property type="term" value="F:manganese ion binding"/>
    <property type="evidence" value="ECO:0007669"/>
    <property type="project" value="UniProtKB-UniRule"/>
</dbReference>
<dbReference type="GO" id="GO:0004619">
    <property type="term" value="F:phosphoglycerate mutase activity"/>
    <property type="evidence" value="ECO:0007669"/>
    <property type="project" value="UniProtKB-EC"/>
</dbReference>
<dbReference type="GO" id="GO:0006007">
    <property type="term" value="P:glucose catabolic process"/>
    <property type="evidence" value="ECO:0007669"/>
    <property type="project" value="InterPro"/>
</dbReference>
<dbReference type="GO" id="GO:0006096">
    <property type="term" value="P:glycolytic process"/>
    <property type="evidence" value="ECO:0007669"/>
    <property type="project" value="UniProtKB-UniRule"/>
</dbReference>
<dbReference type="GO" id="GO:0030435">
    <property type="term" value="P:sporulation resulting in formation of a cellular spore"/>
    <property type="evidence" value="ECO:0007669"/>
    <property type="project" value="UniProtKB-KW"/>
</dbReference>
<dbReference type="CDD" id="cd16010">
    <property type="entry name" value="iPGM"/>
    <property type="match status" value="1"/>
</dbReference>
<dbReference type="FunFam" id="3.40.1450.10:FF:000001">
    <property type="entry name" value="2,3-bisphosphoglycerate-independent phosphoglycerate mutase"/>
    <property type="match status" value="1"/>
</dbReference>
<dbReference type="FunFam" id="3.40.720.10:FF:000001">
    <property type="entry name" value="2,3-bisphosphoglycerate-independent phosphoglycerate mutase"/>
    <property type="match status" value="1"/>
</dbReference>
<dbReference type="Gene3D" id="3.40.720.10">
    <property type="entry name" value="Alkaline Phosphatase, subunit A"/>
    <property type="match status" value="1"/>
</dbReference>
<dbReference type="Gene3D" id="3.40.1450.10">
    <property type="entry name" value="BPG-independent phosphoglycerate mutase, domain B"/>
    <property type="match status" value="1"/>
</dbReference>
<dbReference type="HAMAP" id="MF_01038">
    <property type="entry name" value="GpmI"/>
    <property type="match status" value="1"/>
</dbReference>
<dbReference type="InterPro" id="IPR017850">
    <property type="entry name" value="Alkaline_phosphatase_core_sf"/>
</dbReference>
<dbReference type="InterPro" id="IPR011258">
    <property type="entry name" value="BPG-indep_PGM_N"/>
</dbReference>
<dbReference type="InterPro" id="IPR006124">
    <property type="entry name" value="Metalloenzyme"/>
</dbReference>
<dbReference type="InterPro" id="IPR036646">
    <property type="entry name" value="PGAM_B_sf"/>
</dbReference>
<dbReference type="InterPro" id="IPR005995">
    <property type="entry name" value="Pgm_bpd_ind"/>
</dbReference>
<dbReference type="NCBIfam" id="TIGR01307">
    <property type="entry name" value="pgm_bpd_ind"/>
    <property type="match status" value="1"/>
</dbReference>
<dbReference type="PANTHER" id="PTHR31637">
    <property type="entry name" value="2,3-BISPHOSPHOGLYCERATE-INDEPENDENT PHOSPHOGLYCERATE MUTASE"/>
    <property type="match status" value="1"/>
</dbReference>
<dbReference type="PANTHER" id="PTHR31637:SF0">
    <property type="entry name" value="2,3-BISPHOSPHOGLYCERATE-INDEPENDENT PHOSPHOGLYCERATE MUTASE"/>
    <property type="match status" value="1"/>
</dbReference>
<dbReference type="Pfam" id="PF06415">
    <property type="entry name" value="iPGM_N"/>
    <property type="match status" value="1"/>
</dbReference>
<dbReference type="Pfam" id="PF01676">
    <property type="entry name" value="Metalloenzyme"/>
    <property type="match status" value="1"/>
</dbReference>
<dbReference type="PIRSF" id="PIRSF001492">
    <property type="entry name" value="IPGAM"/>
    <property type="match status" value="1"/>
</dbReference>
<dbReference type="SUPFAM" id="SSF64158">
    <property type="entry name" value="2,3-Bisphosphoglycerate-independent phosphoglycerate mutase, substrate-binding domain"/>
    <property type="match status" value="1"/>
</dbReference>
<dbReference type="SUPFAM" id="SSF53649">
    <property type="entry name" value="Alkaline phosphatase-like"/>
    <property type="match status" value="1"/>
</dbReference>
<comment type="function">
    <text evidence="1">Essential for rapid growth and for sporulation. Catalyzes the interconversion of 2-phosphoglycerate and 3-phosphoglycerate.</text>
</comment>
<comment type="catalytic activity">
    <reaction evidence="1">
        <text>(2R)-2-phosphoglycerate = (2R)-3-phosphoglycerate</text>
        <dbReference type="Rhea" id="RHEA:15901"/>
        <dbReference type="ChEBI" id="CHEBI:58272"/>
        <dbReference type="ChEBI" id="CHEBI:58289"/>
        <dbReference type="EC" id="5.4.2.12"/>
    </reaction>
</comment>
<comment type="cofactor">
    <cofactor evidence="1">
        <name>Mn(2+)</name>
        <dbReference type="ChEBI" id="CHEBI:29035"/>
    </cofactor>
    <text evidence="1">Binds 2 manganese ions per subunit.</text>
</comment>
<comment type="pathway">
    <text evidence="1">Carbohydrate degradation; glycolysis; pyruvate from D-glyceraldehyde 3-phosphate: step 3/5.</text>
</comment>
<comment type="subunit">
    <text evidence="1">Monomer.</text>
</comment>
<comment type="similarity">
    <text evidence="1">Belongs to the BPG-independent phosphoglycerate mutase family.</text>
</comment>
<keyword id="KW-0324">Glycolysis</keyword>
<keyword id="KW-0413">Isomerase</keyword>
<keyword id="KW-0464">Manganese</keyword>
<keyword id="KW-0479">Metal-binding</keyword>
<keyword id="KW-0597">Phosphoprotein</keyword>
<keyword id="KW-0749">Sporulation</keyword>